<keyword id="KW-0066">ATP synthesis</keyword>
<keyword id="KW-0139">CF(1)</keyword>
<keyword id="KW-0150">Chloroplast</keyword>
<keyword id="KW-0375">Hydrogen ion transport</keyword>
<keyword id="KW-0406">Ion transport</keyword>
<keyword id="KW-0472">Membrane</keyword>
<keyword id="KW-0934">Plastid</keyword>
<keyword id="KW-0793">Thylakoid</keyword>
<keyword id="KW-0813">Transport</keyword>
<sequence length="133" mass="14585">MTLNLRVMAPNRTVWTSEAQEIILSSNSGQIGILPNHAPLLTALDIGVMKVRIDSKWTAVALMGGFAQIENNQMTILVNEAEKASDIDPKEAQEAFDLAETSFNQAVGRKQTIEANLAFKRAKARLEAVNAKY</sequence>
<name>ATPE_ZYGCR</name>
<geneLocation type="chloroplast"/>
<comment type="function">
    <text evidence="1">Produces ATP from ADP in the presence of a proton gradient across the membrane.</text>
</comment>
<comment type="subunit">
    <text evidence="1">F-type ATPases have 2 components, CF(1) - the catalytic core - and CF(0) - the membrane proton channel. CF(1) has five subunits: alpha(3), beta(3), gamma(1), delta(1), epsilon(1). CF(0) has three main subunits: a, b and c.</text>
</comment>
<comment type="subcellular location">
    <subcellularLocation>
        <location evidence="1">Plastid</location>
        <location evidence="1">Chloroplast thylakoid membrane</location>
        <topology evidence="1">Peripheral membrane protein</topology>
    </subcellularLocation>
</comment>
<comment type="similarity">
    <text evidence="1">Belongs to the ATPase epsilon chain family.</text>
</comment>
<evidence type="ECO:0000255" key="1">
    <source>
        <dbReference type="HAMAP-Rule" id="MF_00530"/>
    </source>
</evidence>
<gene>
    <name evidence="1" type="primary">atpE</name>
</gene>
<accession>Q32RI1</accession>
<organism>
    <name type="scientific">Zygnema circumcarinatum</name>
    <name type="common">Green alga</name>
    <dbReference type="NCBI Taxonomy" id="35869"/>
    <lineage>
        <taxon>Eukaryota</taxon>
        <taxon>Viridiplantae</taxon>
        <taxon>Streptophyta</taxon>
        <taxon>Zygnematophyceae</taxon>
        <taxon>Zygnematophycidae</taxon>
        <taxon>Zygnematales</taxon>
        <taxon>Zygnemataceae</taxon>
        <taxon>Zygnema</taxon>
    </lineage>
</organism>
<feature type="chain" id="PRO_0000275224" description="ATP synthase epsilon chain, chloroplastic">
    <location>
        <begin position="1"/>
        <end position="133"/>
    </location>
</feature>
<proteinExistence type="inferred from homology"/>
<protein>
    <recommendedName>
        <fullName evidence="1">ATP synthase epsilon chain, chloroplastic</fullName>
    </recommendedName>
    <alternativeName>
        <fullName evidence="1">ATP synthase F1 sector epsilon subunit</fullName>
    </alternativeName>
    <alternativeName>
        <fullName evidence="1">F-ATPase epsilon subunit</fullName>
    </alternativeName>
</protein>
<dbReference type="EMBL" id="AY958086">
    <property type="protein sequence ID" value="AAX45797.1"/>
    <property type="molecule type" value="Genomic_DNA"/>
</dbReference>
<dbReference type="RefSeq" id="YP_636545.1">
    <property type="nucleotide sequence ID" value="NC_008117.1"/>
</dbReference>
<dbReference type="SMR" id="Q32RI1"/>
<dbReference type="GeneID" id="4108257"/>
<dbReference type="GO" id="GO:0009535">
    <property type="term" value="C:chloroplast thylakoid membrane"/>
    <property type="evidence" value="ECO:0007669"/>
    <property type="project" value="UniProtKB-SubCell"/>
</dbReference>
<dbReference type="GO" id="GO:0045259">
    <property type="term" value="C:proton-transporting ATP synthase complex"/>
    <property type="evidence" value="ECO:0007669"/>
    <property type="project" value="UniProtKB-KW"/>
</dbReference>
<dbReference type="GO" id="GO:0005524">
    <property type="term" value="F:ATP binding"/>
    <property type="evidence" value="ECO:0007669"/>
    <property type="project" value="UniProtKB-UniRule"/>
</dbReference>
<dbReference type="GO" id="GO:0046933">
    <property type="term" value="F:proton-transporting ATP synthase activity, rotational mechanism"/>
    <property type="evidence" value="ECO:0007669"/>
    <property type="project" value="UniProtKB-UniRule"/>
</dbReference>
<dbReference type="CDD" id="cd12152">
    <property type="entry name" value="F1-ATPase_delta"/>
    <property type="match status" value="1"/>
</dbReference>
<dbReference type="FunFam" id="2.60.15.10:FF:000002">
    <property type="entry name" value="ATP synthase epsilon chain, chloroplastic"/>
    <property type="match status" value="1"/>
</dbReference>
<dbReference type="Gene3D" id="6.10.140.480">
    <property type="match status" value="1"/>
</dbReference>
<dbReference type="Gene3D" id="2.60.15.10">
    <property type="entry name" value="F0F1 ATP synthase delta/epsilon subunit, N-terminal"/>
    <property type="match status" value="1"/>
</dbReference>
<dbReference type="HAMAP" id="MF_00530">
    <property type="entry name" value="ATP_synth_epsil_bac"/>
    <property type="match status" value="1"/>
</dbReference>
<dbReference type="InterPro" id="IPR001469">
    <property type="entry name" value="ATP_synth_F1_dsu/esu"/>
</dbReference>
<dbReference type="InterPro" id="IPR020546">
    <property type="entry name" value="ATP_synth_F1_dsu/esu_N"/>
</dbReference>
<dbReference type="InterPro" id="IPR020547">
    <property type="entry name" value="ATP_synth_F1_esu_C"/>
</dbReference>
<dbReference type="InterPro" id="IPR036771">
    <property type="entry name" value="ATPsynth_dsu/esu_N"/>
</dbReference>
<dbReference type="NCBIfam" id="TIGR01216">
    <property type="entry name" value="ATP_synt_epsi"/>
    <property type="match status" value="1"/>
</dbReference>
<dbReference type="PANTHER" id="PTHR13822">
    <property type="entry name" value="ATP SYNTHASE DELTA/EPSILON CHAIN"/>
    <property type="match status" value="1"/>
</dbReference>
<dbReference type="PANTHER" id="PTHR13822:SF10">
    <property type="entry name" value="ATP SYNTHASE EPSILON CHAIN, CHLOROPLASTIC"/>
    <property type="match status" value="1"/>
</dbReference>
<dbReference type="Pfam" id="PF00401">
    <property type="entry name" value="ATP-synt_DE"/>
    <property type="match status" value="1"/>
</dbReference>
<dbReference type="Pfam" id="PF02823">
    <property type="entry name" value="ATP-synt_DE_N"/>
    <property type="match status" value="1"/>
</dbReference>
<dbReference type="SUPFAM" id="SSF51344">
    <property type="entry name" value="Epsilon subunit of F1F0-ATP synthase N-terminal domain"/>
    <property type="match status" value="1"/>
</dbReference>
<reference key="1">
    <citation type="journal article" date="2005" name="BMC Biol.">
        <title>The complete chloroplast DNA sequences of the charophycean green algae Staurastrum and Zygnema reveal that the chloroplast genome underwent extensive changes during the evolution of the Zygnematales.</title>
        <authorList>
            <person name="Turmel M."/>
            <person name="Otis C."/>
            <person name="Lemieux C."/>
        </authorList>
    </citation>
    <scope>NUCLEOTIDE SEQUENCE [LARGE SCALE GENOMIC DNA]</scope>
</reference>